<dbReference type="EC" id="5.3.1.1" evidence="1"/>
<dbReference type="EMBL" id="CP000393">
    <property type="protein sequence ID" value="ABG50687.1"/>
    <property type="molecule type" value="Genomic_DNA"/>
</dbReference>
<dbReference type="RefSeq" id="WP_011611066.1">
    <property type="nucleotide sequence ID" value="NC_008312.1"/>
</dbReference>
<dbReference type="SMR" id="Q115Y7"/>
<dbReference type="STRING" id="203124.Tery_1380"/>
<dbReference type="KEGG" id="ter:Tery_1380"/>
<dbReference type="eggNOG" id="COG0149">
    <property type="taxonomic scope" value="Bacteria"/>
</dbReference>
<dbReference type="HOGENOM" id="CLU_024251_2_3_3"/>
<dbReference type="OrthoDB" id="9809429at2"/>
<dbReference type="UniPathway" id="UPA00109">
    <property type="reaction ID" value="UER00189"/>
</dbReference>
<dbReference type="UniPathway" id="UPA00138"/>
<dbReference type="GO" id="GO:0005829">
    <property type="term" value="C:cytosol"/>
    <property type="evidence" value="ECO:0007669"/>
    <property type="project" value="TreeGrafter"/>
</dbReference>
<dbReference type="GO" id="GO:0004807">
    <property type="term" value="F:triose-phosphate isomerase activity"/>
    <property type="evidence" value="ECO:0007669"/>
    <property type="project" value="UniProtKB-UniRule"/>
</dbReference>
<dbReference type="GO" id="GO:0006094">
    <property type="term" value="P:gluconeogenesis"/>
    <property type="evidence" value="ECO:0007669"/>
    <property type="project" value="UniProtKB-UniRule"/>
</dbReference>
<dbReference type="GO" id="GO:0046166">
    <property type="term" value="P:glyceraldehyde-3-phosphate biosynthetic process"/>
    <property type="evidence" value="ECO:0007669"/>
    <property type="project" value="TreeGrafter"/>
</dbReference>
<dbReference type="GO" id="GO:0019563">
    <property type="term" value="P:glycerol catabolic process"/>
    <property type="evidence" value="ECO:0007669"/>
    <property type="project" value="TreeGrafter"/>
</dbReference>
<dbReference type="GO" id="GO:0006096">
    <property type="term" value="P:glycolytic process"/>
    <property type="evidence" value="ECO:0007669"/>
    <property type="project" value="UniProtKB-UniRule"/>
</dbReference>
<dbReference type="CDD" id="cd00311">
    <property type="entry name" value="TIM"/>
    <property type="match status" value="1"/>
</dbReference>
<dbReference type="FunFam" id="3.20.20.70:FF:000016">
    <property type="entry name" value="Triosephosphate isomerase"/>
    <property type="match status" value="1"/>
</dbReference>
<dbReference type="Gene3D" id="3.20.20.70">
    <property type="entry name" value="Aldolase class I"/>
    <property type="match status" value="1"/>
</dbReference>
<dbReference type="HAMAP" id="MF_00147_B">
    <property type="entry name" value="TIM_B"/>
    <property type="match status" value="1"/>
</dbReference>
<dbReference type="InterPro" id="IPR013785">
    <property type="entry name" value="Aldolase_TIM"/>
</dbReference>
<dbReference type="InterPro" id="IPR035990">
    <property type="entry name" value="TIM_sf"/>
</dbReference>
<dbReference type="InterPro" id="IPR022896">
    <property type="entry name" value="TrioseP_Isoase_bac/euk"/>
</dbReference>
<dbReference type="InterPro" id="IPR000652">
    <property type="entry name" value="Triosephosphate_isomerase"/>
</dbReference>
<dbReference type="InterPro" id="IPR020861">
    <property type="entry name" value="Triosephosphate_isomerase_AS"/>
</dbReference>
<dbReference type="NCBIfam" id="TIGR00419">
    <property type="entry name" value="tim"/>
    <property type="match status" value="1"/>
</dbReference>
<dbReference type="PANTHER" id="PTHR21139">
    <property type="entry name" value="TRIOSEPHOSPHATE ISOMERASE"/>
    <property type="match status" value="1"/>
</dbReference>
<dbReference type="PANTHER" id="PTHR21139:SF42">
    <property type="entry name" value="TRIOSEPHOSPHATE ISOMERASE"/>
    <property type="match status" value="1"/>
</dbReference>
<dbReference type="Pfam" id="PF00121">
    <property type="entry name" value="TIM"/>
    <property type="match status" value="1"/>
</dbReference>
<dbReference type="SUPFAM" id="SSF51351">
    <property type="entry name" value="Triosephosphate isomerase (TIM)"/>
    <property type="match status" value="1"/>
</dbReference>
<dbReference type="PROSITE" id="PS00171">
    <property type="entry name" value="TIM_1"/>
    <property type="match status" value="1"/>
</dbReference>
<dbReference type="PROSITE" id="PS51440">
    <property type="entry name" value="TIM_2"/>
    <property type="match status" value="1"/>
</dbReference>
<evidence type="ECO:0000255" key="1">
    <source>
        <dbReference type="HAMAP-Rule" id="MF_00147"/>
    </source>
</evidence>
<accession>Q115Y7</accession>
<gene>
    <name evidence="1" type="primary">tpiA</name>
    <name type="ordered locus">Tery_1380</name>
</gene>
<sequence>MRKTIIAGNWKMYKTQLEAKEFLEGLMSQLTKTPEEREVVLCTPFTALDFMSKILHGSLIRLGAQNVHWEDEGAYTGEISGLMLKDVGVSYVIVGHSERRQYFGETDETVNMRLKAAQKHGLTPILCVGETKQQRDSGETESHIFSQLANDLVDVDQENLVIAYEPIWAIGTGDTCEAKEANRVIGLIRGKLNNSNVTIQYGGSVKPNNVDDIMAQEEIDGALVGGASLNPESFSRLVNYQ</sequence>
<protein>
    <recommendedName>
        <fullName evidence="1">Triosephosphate isomerase</fullName>
        <shortName evidence="1">TIM</shortName>
        <shortName evidence="1">TPI</shortName>
        <ecNumber evidence="1">5.3.1.1</ecNumber>
    </recommendedName>
    <alternativeName>
        <fullName evidence="1">Triose-phosphate isomerase</fullName>
    </alternativeName>
</protein>
<reference key="1">
    <citation type="journal article" date="2015" name="Proc. Natl. Acad. Sci. U.S.A.">
        <title>Trichodesmium genome maintains abundant, widespread noncoding DNA in situ, despite oligotrophic lifestyle.</title>
        <authorList>
            <person name="Walworth N."/>
            <person name="Pfreundt U."/>
            <person name="Nelson W.C."/>
            <person name="Mincer T."/>
            <person name="Heidelberg J.F."/>
            <person name="Fu F."/>
            <person name="Waterbury J.B."/>
            <person name="Glavina del Rio T."/>
            <person name="Goodwin L."/>
            <person name="Kyrpides N.C."/>
            <person name="Land M.L."/>
            <person name="Woyke T."/>
            <person name="Hutchins D.A."/>
            <person name="Hess W.R."/>
            <person name="Webb E.A."/>
        </authorList>
    </citation>
    <scope>NUCLEOTIDE SEQUENCE [LARGE SCALE GENOMIC DNA]</scope>
    <source>
        <strain>IMS101</strain>
    </source>
</reference>
<keyword id="KW-0963">Cytoplasm</keyword>
<keyword id="KW-0312">Gluconeogenesis</keyword>
<keyword id="KW-0324">Glycolysis</keyword>
<keyword id="KW-0413">Isomerase</keyword>
<name>TPIS_TRIEI</name>
<proteinExistence type="inferred from homology"/>
<feature type="chain" id="PRO_0000307594" description="Triosephosphate isomerase">
    <location>
        <begin position="1"/>
        <end position="241"/>
    </location>
</feature>
<feature type="active site" description="Electrophile" evidence="1">
    <location>
        <position position="96"/>
    </location>
</feature>
<feature type="active site" description="Proton acceptor" evidence="1">
    <location>
        <position position="165"/>
    </location>
</feature>
<feature type="binding site" evidence="1">
    <location>
        <begin position="9"/>
        <end position="11"/>
    </location>
    <ligand>
        <name>substrate</name>
    </ligand>
</feature>
<feature type="binding site" evidence="1">
    <location>
        <position position="171"/>
    </location>
    <ligand>
        <name>substrate</name>
    </ligand>
</feature>
<feature type="binding site" evidence="1">
    <location>
        <position position="204"/>
    </location>
    <ligand>
        <name>substrate</name>
    </ligand>
</feature>
<feature type="binding site" evidence="1">
    <location>
        <begin position="225"/>
        <end position="226"/>
    </location>
    <ligand>
        <name>substrate</name>
    </ligand>
</feature>
<organism>
    <name type="scientific">Trichodesmium erythraeum (strain IMS101)</name>
    <dbReference type="NCBI Taxonomy" id="203124"/>
    <lineage>
        <taxon>Bacteria</taxon>
        <taxon>Bacillati</taxon>
        <taxon>Cyanobacteriota</taxon>
        <taxon>Cyanophyceae</taxon>
        <taxon>Oscillatoriophycideae</taxon>
        <taxon>Oscillatoriales</taxon>
        <taxon>Microcoleaceae</taxon>
        <taxon>Trichodesmium</taxon>
    </lineage>
</organism>
<comment type="function">
    <text evidence="1">Involved in the gluconeogenesis. Catalyzes stereospecifically the conversion of dihydroxyacetone phosphate (DHAP) to D-glyceraldehyde-3-phosphate (G3P).</text>
</comment>
<comment type="catalytic activity">
    <reaction evidence="1">
        <text>D-glyceraldehyde 3-phosphate = dihydroxyacetone phosphate</text>
        <dbReference type="Rhea" id="RHEA:18585"/>
        <dbReference type="ChEBI" id="CHEBI:57642"/>
        <dbReference type="ChEBI" id="CHEBI:59776"/>
        <dbReference type="EC" id="5.3.1.1"/>
    </reaction>
</comment>
<comment type="pathway">
    <text evidence="1">Carbohydrate biosynthesis; gluconeogenesis.</text>
</comment>
<comment type="pathway">
    <text evidence="1">Carbohydrate degradation; glycolysis; D-glyceraldehyde 3-phosphate from glycerone phosphate: step 1/1.</text>
</comment>
<comment type="subunit">
    <text evidence="1">Homodimer.</text>
</comment>
<comment type="subcellular location">
    <subcellularLocation>
        <location evidence="1">Cytoplasm</location>
    </subcellularLocation>
</comment>
<comment type="similarity">
    <text evidence="1">Belongs to the triosephosphate isomerase family.</text>
</comment>